<reference key="1">
    <citation type="journal article" date="2012" name="Cell">
        <title>Tiki1 is required for head formation via Wnt cleavage-oxidation and inactivation.</title>
        <authorList>
            <person name="Zhang X."/>
            <person name="Abreu J.G."/>
            <person name="Yokota C."/>
            <person name="Macdonald B.T."/>
            <person name="Singh S."/>
            <person name="Coburn K.L."/>
            <person name="Cheong S.M."/>
            <person name="Zhang M.M."/>
            <person name="Ye Q.Z."/>
            <person name="Hang H.C."/>
            <person name="Steen H."/>
            <person name="He X."/>
        </authorList>
    </citation>
    <scope>NUCLEOTIDE SEQUENCE [MRNA]</scope>
</reference>
<reference key="2">
    <citation type="journal article" date="2013" name="Nature">
        <title>The zebrafish reference genome sequence and its relationship to the human genome.</title>
        <authorList>
            <person name="Howe K."/>
            <person name="Clark M.D."/>
            <person name="Torroja C.F."/>
            <person name="Torrance J."/>
            <person name="Berthelot C."/>
            <person name="Muffato M."/>
            <person name="Collins J.E."/>
            <person name="Humphray S."/>
            <person name="McLaren K."/>
            <person name="Matthews L."/>
            <person name="McLaren S."/>
            <person name="Sealy I."/>
            <person name="Caccamo M."/>
            <person name="Churcher C."/>
            <person name="Scott C."/>
            <person name="Barrett J.C."/>
            <person name="Koch R."/>
            <person name="Rauch G.J."/>
            <person name="White S."/>
            <person name="Chow W."/>
            <person name="Kilian B."/>
            <person name="Quintais L.T."/>
            <person name="Guerra-Assuncao J.A."/>
            <person name="Zhou Y."/>
            <person name="Gu Y."/>
            <person name="Yen J."/>
            <person name="Vogel J.H."/>
            <person name="Eyre T."/>
            <person name="Redmond S."/>
            <person name="Banerjee R."/>
            <person name="Chi J."/>
            <person name="Fu B."/>
            <person name="Langley E."/>
            <person name="Maguire S.F."/>
            <person name="Laird G.K."/>
            <person name="Lloyd D."/>
            <person name="Kenyon E."/>
            <person name="Donaldson S."/>
            <person name="Sehra H."/>
            <person name="Almeida-King J."/>
            <person name="Loveland J."/>
            <person name="Trevanion S."/>
            <person name="Jones M."/>
            <person name="Quail M."/>
            <person name="Willey D."/>
            <person name="Hunt A."/>
            <person name="Burton J."/>
            <person name="Sims S."/>
            <person name="McLay K."/>
            <person name="Plumb B."/>
            <person name="Davis J."/>
            <person name="Clee C."/>
            <person name="Oliver K."/>
            <person name="Clark R."/>
            <person name="Riddle C."/>
            <person name="Elliot D."/>
            <person name="Threadgold G."/>
            <person name="Harden G."/>
            <person name="Ware D."/>
            <person name="Begum S."/>
            <person name="Mortimore B."/>
            <person name="Kerry G."/>
            <person name="Heath P."/>
            <person name="Phillimore B."/>
            <person name="Tracey A."/>
            <person name="Corby N."/>
            <person name="Dunn M."/>
            <person name="Johnson C."/>
            <person name="Wood J."/>
            <person name="Clark S."/>
            <person name="Pelan S."/>
            <person name="Griffiths G."/>
            <person name="Smith M."/>
            <person name="Glithero R."/>
            <person name="Howden P."/>
            <person name="Barker N."/>
            <person name="Lloyd C."/>
            <person name="Stevens C."/>
            <person name="Harley J."/>
            <person name="Holt K."/>
            <person name="Panagiotidis G."/>
            <person name="Lovell J."/>
            <person name="Beasley H."/>
            <person name="Henderson C."/>
            <person name="Gordon D."/>
            <person name="Auger K."/>
            <person name="Wright D."/>
            <person name="Collins J."/>
            <person name="Raisen C."/>
            <person name="Dyer L."/>
            <person name="Leung K."/>
            <person name="Robertson L."/>
            <person name="Ambridge K."/>
            <person name="Leongamornlert D."/>
            <person name="McGuire S."/>
            <person name="Gilderthorp R."/>
            <person name="Griffiths C."/>
            <person name="Manthravadi D."/>
            <person name="Nichol S."/>
            <person name="Barker G."/>
            <person name="Whitehead S."/>
            <person name="Kay M."/>
            <person name="Brown J."/>
            <person name="Murnane C."/>
            <person name="Gray E."/>
            <person name="Humphries M."/>
            <person name="Sycamore N."/>
            <person name="Barker D."/>
            <person name="Saunders D."/>
            <person name="Wallis J."/>
            <person name="Babbage A."/>
            <person name="Hammond S."/>
            <person name="Mashreghi-Mohammadi M."/>
            <person name="Barr L."/>
            <person name="Martin S."/>
            <person name="Wray P."/>
            <person name="Ellington A."/>
            <person name="Matthews N."/>
            <person name="Ellwood M."/>
            <person name="Woodmansey R."/>
            <person name="Clark G."/>
            <person name="Cooper J."/>
            <person name="Tromans A."/>
            <person name="Grafham D."/>
            <person name="Skuce C."/>
            <person name="Pandian R."/>
            <person name="Andrews R."/>
            <person name="Harrison E."/>
            <person name="Kimberley A."/>
            <person name="Garnett J."/>
            <person name="Fosker N."/>
            <person name="Hall R."/>
            <person name="Garner P."/>
            <person name="Kelly D."/>
            <person name="Bird C."/>
            <person name="Palmer S."/>
            <person name="Gehring I."/>
            <person name="Berger A."/>
            <person name="Dooley C.M."/>
            <person name="Ersan-Urun Z."/>
            <person name="Eser C."/>
            <person name="Geiger H."/>
            <person name="Geisler M."/>
            <person name="Karotki L."/>
            <person name="Kirn A."/>
            <person name="Konantz J."/>
            <person name="Konantz M."/>
            <person name="Oberlander M."/>
            <person name="Rudolph-Geiger S."/>
            <person name="Teucke M."/>
            <person name="Lanz C."/>
            <person name="Raddatz G."/>
            <person name="Osoegawa K."/>
            <person name="Zhu B."/>
            <person name="Rapp A."/>
            <person name="Widaa S."/>
            <person name="Langford C."/>
            <person name="Yang F."/>
            <person name="Schuster S.C."/>
            <person name="Carter N.P."/>
            <person name="Harrow J."/>
            <person name="Ning Z."/>
            <person name="Herrero J."/>
            <person name="Searle S.M."/>
            <person name="Enright A."/>
            <person name="Geisler R."/>
            <person name="Plasterk R.H."/>
            <person name="Lee C."/>
            <person name="Westerfield M."/>
            <person name="de Jong P.J."/>
            <person name="Zon L.I."/>
            <person name="Postlethwait J.H."/>
            <person name="Nusslein-Volhard C."/>
            <person name="Hubbard T.J."/>
            <person name="Roest Crollius H."/>
            <person name="Rogers J."/>
            <person name="Stemple D.L."/>
        </authorList>
    </citation>
    <scope>NUCLEOTIDE SEQUENCE [LARGE SCALE GENOMIC DNA]</scope>
    <source>
        <strain>Tuebingen</strain>
    </source>
</reference>
<evidence type="ECO:0000250" key="1"/>
<evidence type="ECO:0000255" key="2"/>
<evidence type="ECO:0000305" key="3"/>
<name>TIKI1_DANRE</name>
<proteinExistence type="evidence at transcript level"/>
<organism>
    <name type="scientific">Danio rerio</name>
    <name type="common">Zebrafish</name>
    <name type="synonym">Brachydanio rerio</name>
    <dbReference type="NCBI Taxonomy" id="7955"/>
    <lineage>
        <taxon>Eukaryota</taxon>
        <taxon>Metazoa</taxon>
        <taxon>Chordata</taxon>
        <taxon>Craniata</taxon>
        <taxon>Vertebrata</taxon>
        <taxon>Euteleostomi</taxon>
        <taxon>Actinopterygii</taxon>
        <taxon>Neopterygii</taxon>
        <taxon>Teleostei</taxon>
        <taxon>Ostariophysi</taxon>
        <taxon>Cypriniformes</taxon>
        <taxon>Danionidae</taxon>
        <taxon>Danioninae</taxon>
        <taxon>Danio</taxon>
    </lineage>
</organism>
<feature type="signal peptide" evidence="2">
    <location>
        <begin position="1"/>
        <end position="25"/>
    </location>
</feature>
<feature type="chain" id="PRO_0000419450" description="Metalloprotease TIKI1">
    <location>
        <begin position="26"/>
        <end position="494"/>
    </location>
</feature>
<feature type="topological domain" description="Extracellular" evidence="2">
    <location>
        <begin position="26"/>
        <end position="467"/>
    </location>
</feature>
<feature type="transmembrane region" description="Helical" evidence="2">
    <location>
        <begin position="468"/>
        <end position="488"/>
    </location>
</feature>
<feature type="topological domain" description="Cytoplasmic" evidence="2">
    <location>
        <begin position="489"/>
        <end position="494"/>
    </location>
</feature>
<feature type="glycosylation site" description="N-linked (GlcNAc...) asparagine" evidence="2">
    <location>
        <position position="234"/>
    </location>
</feature>
<feature type="glycosylation site" description="N-linked (GlcNAc...) asparagine" evidence="2">
    <location>
        <position position="282"/>
    </location>
</feature>
<feature type="sequence conflict" description="In Ref. 1; AFN02885." evidence="3" ref="1">
    <original>E</original>
    <variation>D</variation>
    <location>
        <position position="459"/>
    </location>
</feature>
<feature type="sequence conflict" description="In Ref. 1; AFN02885." evidence="3" ref="1">
    <original>R</original>
    <variation>W</variation>
    <location>
        <position position="475"/>
    </location>
</feature>
<sequence>MTMMTMMMVSWSAFLQICWILMVRANQFNPGEPSGCRTNTPQSDLNSFLWTIKRDPPSYLYGTIHVPYTRVWDFIPQNSKQAFQESSVVYFELELTDPSTISALSRCQLLPAGQNLQDVLPPELYLRLKTHLEYVRLMLPSWMTPDQRGKGLYAEYLFNAIAGNWERKRPVWVMLMVNSLTEADIKTRGVPVLDLYLAQEAERMKKQTGAVEKVEEQCSPLNTLDFSQVIFALNQTLLQQESVRAGSLQVPYTTEHLITHYNCGDLHSIISHDTAQVPNFNNVTLRPSDQVTAQQIDSYFRRELIYKRNERMGRRVTALLQEQPHKTFFFAFGAGHFLGNNSVIDVLRREGYEVEHTPAGQPLHRRSGWRSADPADTDAALQPFLHHSRHHELQLLEGLELLEKVEHKLKKKHRRNKLKKQRQFNDLWVRMEDSVTAEAPPPLIHIINGYITVQTHPQEHERANHDRTFSGSSSRTGPALSALAVCVQMLRLLL</sequence>
<accession>E7F6V0</accession>
<accession>I6UWG3</accession>
<dbReference type="EC" id="3.4.-.-"/>
<dbReference type="EMBL" id="JQ653419">
    <property type="protein sequence ID" value="AFN02885.1"/>
    <property type="molecule type" value="mRNA"/>
</dbReference>
<dbReference type="EMBL" id="CABZ01071835">
    <property type="status" value="NOT_ANNOTATED_CDS"/>
    <property type="molecule type" value="Genomic_DNA"/>
</dbReference>
<dbReference type="EMBL" id="CABZ01071836">
    <property type="status" value="NOT_ANNOTATED_CDS"/>
    <property type="molecule type" value="Genomic_DNA"/>
</dbReference>
<dbReference type="EMBL" id="CABZ01071837">
    <property type="status" value="NOT_ANNOTATED_CDS"/>
    <property type="molecule type" value="Genomic_DNA"/>
</dbReference>
<dbReference type="EMBL" id="CABZ01071838">
    <property type="status" value="NOT_ANNOTATED_CDS"/>
    <property type="molecule type" value="Genomic_DNA"/>
</dbReference>
<dbReference type="EMBL" id="CABZ01071839">
    <property type="status" value="NOT_ANNOTATED_CDS"/>
    <property type="molecule type" value="Genomic_DNA"/>
</dbReference>
<dbReference type="EMBL" id="CABZ01071840">
    <property type="status" value="NOT_ANNOTATED_CDS"/>
    <property type="molecule type" value="Genomic_DNA"/>
</dbReference>
<dbReference type="EMBL" id="CABZ01071841">
    <property type="status" value="NOT_ANNOTATED_CDS"/>
    <property type="molecule type" value="Genomic_DNA"/>
</dbReference>
<dbReference type="EMBL" id="CABZ01071842">
    <property type="status" value="NOT_ANNOTATED_CDS"/>
    <property type="molecule type" value="Genomic_DNA"/>
</dbReference>
<dbReference type="RefSeq" id="NP_001289159.1">
    <property type="nucleotide sequence ID" value="NM_001302230.1"/>
</dbReference>
<dbReference type="STRING" id="7955.ENSDARP00000108636"/>
<dbReference type="GlyCosmos" id="E7F6V0">
    <property type="glycosylation" value="2 sites, No reported glycans"/>
</dbReference>
<dbReference type="PaxDb" id="7955-ENSDARP00000108636"/>
<dbReference type="Ensembl" id="ENSDART00000127504">
    <property type="protein sequence ID" value="ENSDARP00000108636"/>
    <property type="gene ID" value="ENSDARG00000089701"/>
</dbReference>
<dbReference type="GeneID" id="564021"/>
<dbReference type="KEGG" id="dre:564021"/>
<dbReference type="AGR" id="ZFIN:ZDB-GENE-030131-4053"/>
<dbReference type="CTD" id="129293"/>
<dbReference type="ZFIN" id="ZDB-GENE-030131-4053">
    <property type="gene designation" value="trabd2a"/>
</dbReference>
<dbReference type="eggNOG" id="ENOG502QPR1">
    <property type="taxonomic scope" value="Eukaryota"/>
</dbReference>
<dbReference type="InParanoid" id="E7F6V0"/>
<dbReference type="OMA" id="HHHDLER"/>
<dbReference type="OrthoDB" id="10040378at2759"/>
<dbReference type="PRO" id="PR:E7F6V0"/>
<dbReference type="Proteomes" id="UP000000437">
    <property type="component" value="Chromosome 5"/>
</dbReference>
<dbReference type="Bgee" id="ENSDARG00000089701">
    <property type="expression patterns" value="Expressed in embryo and 4 other cell types or tissues"/>
</dbReference>
<dbReference type="ExpressionAtlas" id="E7F6V0">
    <property type="expression patterns" value="baseline"/>
</dbReference>
<dbReference type="GO" id="GO:0016020">
    <property type="term" value="C:membrane"/>
    <property type="evidence" value="ECO:0000318"/>
    <property type="project" value="GO_Central"/>
</dbReference>
<dbReference type="GO" id="GO:0031090">
    <property type="term" value="C:organelle membrane"/>
    <property type="evidence" value="ECO:0000250"/>
    <property type="project" value="UniProtKB"/>
</dbReference>
<dbReference type="GO" id="GO:0005886">
    <property type="term" value="C:plasma membrane"/>
    <property type="evidence" value="ECO:0000250"/>
    <property type="project" value="UniProtKB"/>
</dbReference>
<dbReference type="GO" id="GO:0046872">
    <property type="term" value="F:metal ion binding"/>
    <property type="evidence" value="ECO:0007669"/>
    <property type="project" value="UniProtKB-KW"/>
</dbReference>
<dbReference type="GO" id="GO:0004222">
    <property type="term" value="F:metalloendopeptidase activity"/>
    <property type="evidence" value="ECO:0000250"/>
    <property type="project" value="UniProtKB"/>
</dbReference>
<dbReference type="GO" id="GO:0017147">
    <property type="term" value="F:Wnt-protein binding"/>
    <property type="evidence" value="ECO:0000250"/>
    <property type="project" value="UniProtKB"/>
</dbReference>
<dbReference type="GO" id="GO:0060322">
    <property type="term" value="P:head development"/>
    <property type="evidence" value="ECO:0000250"/>
    <property type="project" value="UniProtKB"/>
</dbReference>
<dbReference type="GO" id="GO:0030178">
    <property type="term" value="P:negative regulation of Wnt signaling pathway"/>
    <property type="evidence" value="ECO:0000250"/>
    <property type="project" value="UniProtKB"/>
</dbReference>
<dbReference type="GO" id="GO:0006508">
    <property type="term" value="P:proteolysis"/>
    <property type="evidence" value="ECO:0007669"/>
    <property type="project" value="UniProtKB-KW"/>
</dbReference>
<dbReference type="GO" id="GO:0016055">
    <property type="term" value="P:Wnt signaling pathway"/>
    <property type="evidence" value="ECO:0007669"/>
    <property type="project" value="UniProtKB-KW"/>
</dbReference>
<dbReference type="CDD" id="cd14789">
    <property type="entry name" value="Tiki"/>
    <property type="match status" value="1"/>
</dbReference>
<dbReference type="InterPro" id="IPR040230">
    <property type="entry name" value="TIKI1/2-like"/>
</dbReference>
<dbReference type="InterPro" id="IPR002816">
    <property type="entry name" value="TraB/PrgY/GumN_fam"/>
</dbReference>
<dbReference type="PANTHER" id="PTHR31120">
    <property type="entry name" value="METALLOPROTEASE TIKI"/>
    <property type="match status" value="1"/>
</dbReference>
<dbReference type="PANTHER" id="PTHR31120:SF7">
    <property type="entry name" value="METALLOPROTEASE TIKI1"/>
    <property type="match status" value="1"/>
</dbReference>
<dbReference type="Pfam" id="PF01963">
    <property type="entry name" value="TraB_PrgY_gumN"/>
    <property type="match status" value="1"/>
</dbReference>
<protein>
    <recommendedName>
        <fullName>Metalloprotease TIKI1</fullName>
        <ecNumber>3.4.-.-</ecNumber>
    </recommendedName>
    <alternativeName>
        <fullName>TRAB domain-containing protein 2A</fullName>
    </alternativeName>
</protein>
<keyword id="KW-1003">Cell membrane</keyword>
<keyword id="KW-0325">Glycoprotein</keyword>
<keyword id="KW-0378">Hydrolase</keyword>
<keyword id="KW-0472">Membrane</keyword>
<keyword id="KW-0479">Metal-binding</keyword>
<keyword id="KW-0482">Metalloprotease</keyword>
<keyword id="KW-0645">Protease</keyword>
<keyword id="KW-1185">Reference proteome</keyword>
<keyword id="KW-0732">Signal</keyword>
<keyword id="KW-0812">Transmembrane</keyword>
<keyword id="KW-1133">Transmembrane helix</keyword>
<keyword id="KW-0879">Wnt signaling pathway</keyword>
<gene>
    <name type="primary">trabd2a</name>
    <name type="synonym">tiki1</name>
    <name type="ORF">wu:fc66h01</name>
</gene>
<comment type="function">
    <text evidence="1">Metalloprotease that acts as a negative regulator of the Wnt signaling pathway by mediating the cleavage of the N-terminal residues of a subset of Wnt proteins. Following cleavage, Wnt proteins become oxidized and form large disulfide-bond oligomers, leading to their inactivation (By similarity).</text>
</comment>
<comment type="cofactor">
    <cofactor evidence="1">
        <name>Mn(2+)</name>
        <dbReference type="ChEBI" id="CHEBI:29035"/>
    </cofactor>
    <cofactor evidence="1">
        <name>Co(2+)</name>
        <dbReference type="ChEBI" id="CHEBI:48828"/>
    </cofactor>
    <text evidence="1">Divalent metal cations. Mn(2+) or Co(2+).</text>
</comment>
<comment type="subcellular location">
    <subcellularLocation>
        <location evidence="1">Cell membrane</location>
        <topology evidence="1">Single-pass type I membrane protein</topology>
    </subcellularLocation>
</comment>
<comment type="similarity">
    <text evidence="3">Belongs to the TIKI family.</text>
</comment>